<comment type="function">
    <text evidence="1">Nucleoside triphosphate pyrophosphatase that hydrolyzes dTTP and UTP. May have a dual role in cell division arrest and in preventing the incorporation of modified nucleotides into cellular nucleic acids.</text>
</comment>
<comment type="catalytic activity">
    <reaction evidence="1">
        <text>dTTP + H2O = dTMP + diphosphate + H(+)</text>
        <dbReference type="Rhea" id="RHEA:28534"/>
        <dbReference type="ChEBI" id="CHEBI:15377"/>
        <dbReference type="ChEBI" id="CHEBI:15378"/>
        <dbReference type="ChEBI" id="CHEBI:33019"/>
        <dbReference type="ChEBI" id="CHEBI:37568"/>
        <dbReference type="ChEBI" id="CHEBI:63528"/>
        <dbReference type="EC" id="3.6.1.9"/>
    </reaction>
</comment>
<comment type="catalytic activity">
    <reaction evidence="1">
        <text>UTP + H2O = UMP + diphosphate + H(+)</text>
        <dbReference type="Rhea" id="RHEA:29395"/>
        <dbReference type="ChEBI" id="CHEBI:15377"/>
        <dbReference type="ChEBI" id="CHEBI:15378"/>
        <dbReference type="ChEBI" id="CHEBI:33019"/>
        <dbReference type="ChEBI" id="CHEBI:46398"/>
        <dbReference type="ChEBI" id="CHEBI:57865"/>
        <dbReference type="EC" id="3.6.1.9"/>
    </reaction>
</comment>
<comment type="cofactor">
    <cofactor evidence="1">
        <name>a divalent metal cation</name>
        <dbReference type="ChEBI" id="CHEBI:60240"/>
    </cofactor>
</comment>
<comment type="subcellular location">
    <subcellularLocation>
        <location evidence="1">Cytoplasm</location>
    </subcellularLocation>
</comment>
<comment type="similarity">
    <text evidence="1">Belongs to the Maf family. YhdE subfamily.</text>
</comment>
<sequence length="192" mass="21238">MKPALILASESPRRKQLLSEAGFSFDVVPVKVSEIPNKNLNVNDQILDIARRKASAALPLLKSSRQDAFIVLCADTEVIFNGAPLGKPADRQDAYRILKLLSGKYHEVITAVCLVESSTGKEVSQTETTKIYFRQLTDDEIWTYIDTGEPMDKAGAYGIQGQGGKFIERFDGPFYNVVGLPIDLVKNLLSKF</sequence>
<protein>
    <recommendedName>
        <fullName evidence="1">dTTP/UTP pyrophosphatase</fullName>
        <shortName evidence="1">dTTPase/UTPase</shortName>
        <ecNumber evidence="1">3.6.1.9</ecNumber>
    </recommendedName>
    <alternativeName>
        <fullName evidence="1">Nucleoside triphosphate pyrophosphatase</fullName>
    </alternativeName>
    <alternativeName>
        <fullName evidence="1">Nucleotide pyrophosphatase</fullName>
        <shortName evidence="1">Nucleotide PPase</shortName>
    </alternativeName>
</protein>
<evidence type="ECO:0000255" key="1">
    <source>
        <dbReference type="HAMAP-Rule" id="MF_00528"/>
    </source>
</evidence>
<dbReference type="EC" id="3.6.1.9" evidence="1"/>
<dbReference type="EMBL" id="BX842647">
    <property type="protein sequence ID" value="CAE78450.1"/>
    <property type="molecule type" value="Genomic_DNA"/>
</dbReference>
<dbReference type="RefSeq" id="WP_011163052.1">
    <property type="nucleotide sequence ID" value="NC_005363.1"/>
</dbReference>
<dbReference type="SMR" id="Q6MQJ7"/>
<dbReference type="STRING" id="264462.Bd0469"/>
<dbReference type="GeneID" id="93011581"/>
<dbReference type="KEGG" id="bba:Bd0469"/>
<dbReference type="eggNOG" id="COG0424">
    <property type="taxonomic scope" value="Bacteria"/>
</dbReference>
<dbReference type="HOGENOM" id="CLU_040416_0_0_7"/>
<dbReference type="Proteomes" id="UP000008080">
    <property type="component" value="Chromosome"/>
</dbReference>
<dbReference type="GO" id="GO:0005737">
    <property type="term" value="C:cytoplasm"/>
    <property type="evidence" value="ECO:0007669"/>
    <property type="project" value="UniProtKB-SubCell"/>
</dbReference>
<dbReference type="GO" id="GO:0036218">
    <property type="term" value="F:dTTP diphosphatase activity"/>
    <property type="evidence" value="ECO:0007669"/>
    <property type="project" value="RHEA"/>
</dbReference>
<dbReference type="GO" id="GO:0036221">
    <property type="term" value="F:UTP diphosphatase activity"/>
    <property type="evidence" value="ECO:0007669"/>
    <property type="project" value="RHEA"/>
</dbReference>
<dbReference type="GO" id="GO:0009117">
    <property type="term" value="P:nucleotide metabolic process"/>
    <property type="evidence" value="ECO:0007669"/>
    <property type="project" value="UniProtKB-KW"/>
</dbReference>
<dbReference type="CDD" id="cd00555">
    <property type="entry name" value="Maf"/>
    <property type="match status" value="1"/>
</dbReference>
<dbReference type="Gene3D" id="3.90.950.10">
    <property type="match status" value="1"/>
</dbReference>
<dbReference type="HAMAP" id="MF_00528">
    <property type="entry name" value="Maf"/>
    <property type="match status" value="1"/>
</dbReference>
<dbReference type="InterPro" id="IPR029001">
    <property type="entry name" value="ITPase-like_fam"/>
</dbReference>
<dbReference type="InterPro" id="IPR003697">
    <property type="entry name" value="Maf-like"/>
</dbReference>
<dbReference type="NCBIfam" id="TIGR00172">
    <property type="entry name" value="maf"/>
    <property type="match status" value="1"/>
</dbReference>
<dbReference type="PANTHER" id="PTHR43213">
    <property type="entry name" value="BIFUNCTIONAL DTTP/UTP PYROPHOSPHATASE/METHYLTRANSFERASE PROTEIN-RELATED"/>
    <property type="match status" value="1"/>
</dbReference>
<dbReference type="PANTHER" id="PTHR43213:SF5">
    <property type="entry name" value="BIFUNCTIONAL DTTP_UTP PYROPHOSPHATASE_METHYLTRANSFERASE PROTEIN-RELATED"/>
    <property type="match status" value="1"/>
</dbReference>
<dbReference type="Pfam" id="PF02545">
    <property type="entry name" value="Maf"/>
    <property type="match status" value="1"/>
</dbReference>
<dbReference type="PIRSF" id="PIRSF006305">
    <property type="entry name" value="Maf"/>
    <property type="match status" value="1"/>
</dbReference>
<dbReference type="SUPFAM" id="SSF52972">
    <property type="entry name" value="ITPase-like"/>
    <property type="match status" value="1"/>
</dbReference>
<gene>
    <name type="ordered locus">Bd0469</name>
</gene>
<name>NTPPA_BDEBA</name>
<keyword id="KW-0963">Cytoplasm</keyword>
<keyword id="KW-0378">Hydrolase</keyword>
<keyword id="KW-0546">Nucleotide metabolism</keyword>
<keyword id="KW-1185">Reference proteome</keyword>
<organism>
    <name type="scientific">Bdellovibrio bacteriovorus (strain ATCC 15356 / DSM 50701 / NCIMB 9529 / HD100)</name>
    <dbReference type="NCBI Taxonomy" id="264462"/>
    <lineage>
        <taxon>Bacteria</taxon>
        <taxon>Pseudomonadati</taxon>
        <taxon>Bdellovibrionota</taxon>
        <taxon>Bdellovibrionia</taxon>
        <taxon>Bdellovibrionales</taxon>
        <taxon>Pseudobdellovibrionaceae</taxon>
        <taxon>Bdellovibrio</taxon>
    </lineage>
</organism>
<reference key="1">
    <citation type="journal article" date="2004" name="Science">
        <title>A predator unmasked: life cycle of Bdellovibrio bacteriovorus from a genomic perspective.</title>
        <authorList>
            <person name="Rendulic S."/>
            <person name="Jagtap P."/>
            <person name="Rosinus A."/>
            <person name="Eppinger M."/>
            <person name="Baar C."/>
            <person name="Lanz C."/>
            <person name="Keller H."/>
            <person name="Lambert C."/>
            <person name="Evans K.J."/>
            <person name="Goesmann A."/>
            <person name="Meyer F."/>
            <person name="Sockett R.E."/>
            <person name="Schuster S.C."/>
        </authorList>
    </citation>
    <scope>NUCLEOTIDE SEQUENCE [LARGE SCALE GENOMIC DNA]</scope>
    <source>
        <strain>ATCC 15356 / DSM 50701 / NCIMB 9529 / HD100</strain>
    </source>
</reference>
<accession>Q6MQJ7</accession>
<proteinExistence type="inferred from homology"/>
<feature type="chain" id="PRO_0000267254" description="dTTP/UTP pyrophosphatase">
    <location>
        <begin position="1"/>
        <end position="192"/>
    </location>
</feature>
<feature type="active site" description="Proton acceptor" evidence="1">
    <location>
        <position position="75"/>
    </location>
</feature>
<feature type="site" description="Important for substrate specificity" evidence="1">
    <location>
        <position position="13"/>
    </location>
</feature>
<feature type="site" description="Important for substrate specificity" evidence="1">
    <location>
        <position position="76"/>
    </location>
</feature>
<feature type="site" description="Important for substrate specificity" evidence="1">
    <location>
        <position position="160"/>
    </location>
</feature>